<accession>Q8BB24</accession>
<sequence length="230" mass="26287">MSSPTTPVPVISWTADEAIKFLKEWNFSLGIIVLFITIILQFGYTSRSMFVYVIKMVILWLMWPLTIILTIFNCVYALNNVYLGFSIVFTIVAIIMWVVYFVNSIRLFIRTGSWWSFNPETNNLMCIDMKGRMYVRPIIEDYHTLTATIIRGHLYIQGIKLGTGYSLSDLPAYVTVAKVTHLCTYKRGFLDRIGDTSGFAVYVKSKVGNYRLPSTHKGSGMDTALLRNNI</sequence>
<keyword id="KW-0325">Glycoprotein</keyword>
<keyword id="KW-1040">Host Golgi apparatus</keyword>
<keyword id="KW-1043">Host membrane</keyword>
<keyword id="KW-0945">Host-virus interaction</keyword>
<keyword id="KW-0472">Membrane</keyword>
<keyword id="KW-1185">Reference proteome</keyword>
<keyword id="KW-0812">Transmembrane</keyword>
<keyword id="KW-1133">Transmembrane helix</keyword>
<keyword id="KW-0261">Viral envelope protein</keyword>
<keyword id="KW-0899">Viral immunoevasion</keyword>
<keyword id="KW-0468">Viral matrix protein</keyword>
<keyword id="KW-0946">Virion</keyword>
<feature type="chain" id="PRO_0000106041" description="Membrane protein">
    <location>
        <begin position="1"/>
        <end position="230"/>
    </location>
</feature>
<feature type="topological domain" description="Virion surface" evidence="1">
    <location>
        <begin position="1"/>
        <end position="24"/>
    </location>
</feature>
<feature type="transmembrane region" description="Helical" evidence="1">
    <location>
        <begin position="25"/>
        <end position="45"/>
    </location>
</feature>
<feature type="topological domain" description="Intravirion" evidence="1">
    <location>
        <begin position="46"/>
        <end position="55"/>
    </location>
</feature>
<feature type="transmembrane region" description="Helical" evidence="1">
    <location>
        <begin position="56"/>
        <end position="76"/>
    </location>
</feature>
<feature type="topological domain" description="Virion surface" evidence="1">
    <location>
        <begin position="77"/>
        <end position="84"/>
    </location>
</feature>
<feature type="transmembrane region" description="Helical" evidence="1">
    <location>
        <begin position="85"/>
        <end position="105"/>
    </location>
</feature>
<feature type="topological domain" description="Intravirion" evidence="1">
    <location>
        <begin position="106"/>
        <end position="228"/>
    </location>
</feature>
<protein>
    <recommendedName>
        <fullName evidence="1">Membrane protein</fullName>
        <shortName evidence="1">M protein</shortName>
    </recommendedName>
    <alternativeName>
        <fullName evidence="1">E1 glycoprotein</fullName>
    </alternativeName>
    <alternativeName>
        <fullName evidence="1">Matrix glycoprotein</fullName>
    </alternativeName>
    <alternativeName>
        <fullName evidence="1">Membrane glycoprotein</fullName>
    </alternativeName>
</protein>
<reference key="1">
    <citation type="journal article" date="2002" name="J. Gen. Virol.">
        <title>Sequence of the 3'-terminal end (8.1 kb) of the genome of porcine haemagglutinating encephalomyelitis virus: comparison with other haemagglutinating coronaviruses.</title>
        <authorList>
            <person name="Sasseville A.M.-J."/>
            <person name="Boutin M."/>
            <person name="Gelinas A.-M."/>
            <person name="Dea S."/>
        </authorList>
    </citation>
    <scope>NUCLEOTIDE SEQUENCE [GENOMIC RNA]</scope>
</reference>
<gene>
    <name evidence="1" type="primary">M</name>
</gene>
<name>VME1_CVP67</name>
<proteinExistence type="inferred from homology"/>
<dbReference type="EMBL" id="AY078417">
    <property type="protein sequence ID" value="AAL80035.1"/>
    <property type="molecule type" value="Genomic_RNA"/>
</dbReference>
<dbReference type="SMR" id="Q8BB24"/>
<dbReference type="Proteomes" id="UP000007546">
    <property type="component" value="Genome"/>
</dbReference>
<dbReference type="GO" id="GO:0044178">
    <property type="term" value="C:host cell Golgi membrane"/>
    <property type="evidence" value="ECO:0007669"/>
    <property type="project" value="UniProtKB-SubCell"/>
</dbReference>
<dbReference type="GO" id="GO:0016020">
    <property type="term" value="C:membrane"/>
    <property type="evidence" value="ECO:0007669"/>
    <property type="project" value="UniProtKB-UniRule"/>
</dbReference>
<dbReference type="GO" id="GO:0019031">
    <property type="term" value="C:viral envelope"/>
    <property type="evidence" value="ECO:0007669"/>
    <property type="project" value="UniProtKB-UniRule"/>
</dbReference>
<dbReference type="GO" id="GO:0055036">
    <property type="term" value="C:virion membrane"/>
    <property type="evidence" value="ECO:0007669"/>
    <property type="project" value="UniProtKB-SubCell"/>
</dbReference>
<dbReference type="GO" id="GO:0039660">
    <property type="term" value="F:structural constituent of virion"/>
    <property type="evidence" value="ECO:0007669"/>
    <property type="project" value="UniProtKB-UniRule"/>
</dbReference>
<dbReference type="CDD" id="cd21568">
    <property type="entry name" value="HCoV-like_M"/>
    <property type="match status" value="1"/>
</dbReference>
<dbReference type="HAMAP" id="MF_04202">
    <property type="entry name" value="BETA_CORONA_M"/>
    <property type="match status" value="1"/>
</dbReference>
<dbReference type="InterPro" id="IPR002574">
    <property type="entry name" value="M_CoV"/>
</dbReference>
<dbReference type="InterPro" id="IPR044362">
    <property type="entry name" value="M_HCoV-like"/>
</dbReference>
<dbReference type="Pfam" id="PF01635">
    <property type="entry name" value="CoV_M"/>
    <property type="match status" value="1"/>
</dbReference>
<dbReference type="PROSITE" id="PS51927">
    <property type="entry name" value="COV_M"/>
    <property type="match status" value="1"/>
</dbReference>
<organism>
    <name type="scientific">Porcine hemagglutinating encephalomyelitis virus (strain 67N)</name>
    <name type="common">HEV-67N</name>
    <dbReference type="NCBI Taxonomy" id="230237"/>
    <lineage>
        <taxon>Viruses</taxon>
        <taxon>Riboviria</taxon>
        <taxon>Orthornavirae</taxon>
        <taxon>Pisuviricota</taxon>
        <taxon>Pisoniviricetes</taxon>
        <taxon>Nidovirales</taxon>
        <taxon>Cornidovirineae</taxon>
        <taxon>Coronaviridae</taxon>
        <taxon>Orthocoronavirinae</taxon>
        <taxon>Betacoronavirus</taxon>
        <taxon>Embecovirus</taxon>
        <taxon>Betacoronavirus 1</taxon>
    </lineage>
</organism>
<comment type="function">
    <text evidence="1 2">Component of the viral envelope that plays a central role in virus morphogenesis and assembly via its interactions with other viral proteins.</text>
</comment>
<comment type="subunit">
    <text evidence="1 2">Homomultimer. Interacts with envelope E protein in the budding compartment of the host cell, which is located between endoplasmic reticulum and the Golgi complex. Forms a complex with HE and S proteins. Interacts with nucleocapsid N protein. This interaction probably participates in RNA packaging into the virus.</text>
</comment>
<comment type="subcellular location">
    <subcellularLocation>
        <location evidence="1">Virion membrane</location>
        <topology evidence="1">Multi-pass membrane protein</topology>
    </subcellularLocation>
    <subcellularLocation>
        <location evidence="1">Host Golgi apparatus membrane</location>
        <topology evidence="1">Multi-pass membrane protein</topology>
    </subcellularLocation>
    <text evidence="1">Largely embedded in the lipid bilayer.</text>
</comment>
<comment type="similarity">
    <text evidence="1">Belongs to the betacoronaviruses M protein family.</text>
</comment>
<organismHost>
    <name type="scientific">Sus scrofa</name>
    <name type="common">Pig</name>
    <dbReference type="NCBI Taxonomy" id="9823"/>
</organismHost>
<evidence type="ECO:0000255" key="1">
    <source>
        <dbReference type="HAMAP-Rule" id="MF_04202"/>
    </source>
</evidence>
<evidence type="ECO:0000255" key="2">
    <source>
        <dbReference type="PROSITE-ProRule" id="PRU01275"/>
    </source>
</evidence>